<accession>Q2RGV9</accession>
<protein>
    <recommendedName>
        <fullName evidence="1">Imidazoleglycerol-phosphate dehydratase</fullName>
        <shortName evidence="1">IGPD</shortName>
        <ecNumber evidence="1">4.2.1.19</ecNumber>
    </recommendedName>
</protein>
<evidence type="ECO:0000255" key="1">
    <source>
        <dbReference type="HAMAP-Rule" id="MF_00076"/>
    </source>
</evidence>
<organism>
    <name type="scientific">Moorella thermoacetica (strain ATCC 39073 / JCM 9320)</name>
    <dbReference type="NCBI Taxonomy" id="264732"/>
    <lineage>
        <taxon>Bacteria</taxon>
        <taxon>Bacillati</taxon>
        <taxon>Bacillota</taxon>
        <taxon>Clostridia</taxon>
        <taxon>Moorellales</taxon>
        <taxon>Moorellaceae</taxon>
        <taxon>Moorella</taxon>
    </lineage>
</organism>
<gene>
    <name evidence="1" type="primary">hisB</name>
    <name type="ordered locus">Moth_2034</name>
</gene>
<feature type="chain" id="PRO_1000057520" description="Imidazoleglycerol-phosphate dehydratase">
    <location>
        <begin position="1"/>
        <end position="196"/>
    </location>
</feature>
<name>HIS7_MOOTA</name>
<keyword id="KW-0028">Amino-acid biosynthesis</keyword>
<keyword id="KW-0963">Cytoplasm</keyword>
<keyword id="KW-0368">Histidine biosynthesis</keyword>
<keyword id="KW-0456">Lyase</keyword>
<dbReference type="EC" id="4.2.1.19" evidence="1"/>
<dbReference type="EMBL" id="CP000232">
    <property type="protein sequence ID" value="ABC20330.1"/>
    <property type="molecule type" value="Genomic_DNA"/>
</dbReference>
<dbReference type="RefSeq" id="YP_430873.1">
    <property type="nucleotide sequence ID" value="NC_007644.1"/>
</dbReference>
<dbReference type="SMR" id="Q2RGV9"/>
<dbReference type="STRING" id="264732.Moth_2034"/>
<dbReference type="EnsemblBacteria" id="ABC20330">
    <property type="protein sequence ID" value="ABC20330"/>
    <property type="gene ID" value="Moth_2034"/>
</dbReference>
<dbReference type="KEGG" id="mta:Moth_2034"/>
<dbReference type="PATRIC" id="fig|264732.11.peg.2209"/>
<dbReference type="eggNOG" id="COG0131">
    <property type="taxonomic scope" value="Bacteria"/>
</dbReference>
<dbReference type="HOGENOM" id="CLU_044308_3_0_9"/>
<dbReference type="OrthoDB" id="9790411at2"/>
<dbReference type="UniPathway" id="UPA00031">
    <property type="reaction ID" value="UER00011"/>
</dbReference>
<dbReference type="GO" id="GO:0005737">
    <property type="term" value="C:cytoplasm"/>
    <property type="evidence" value="ECO:0007669"/>
    <property type="project" value="UniProtKB-SubCell"/>
</dbReference>
<dbReference type="GO" id="GO:0004424">
    <property type="term" value="F:imidazoleglycerol-phosphate dehydratase activity"/>
    <property type="evidence" value="ECO:0007669"/>
    <property type="project" value="UniProtKB-UniRule"/>
</dbReference>
<dbReference type="GO" id="GO:0000105">
    <property type="term" value="P:L-histidine biosynthetic process"/>
    <property type="evidence" value="ECO:0007669"/>
    <property type="project" value="UniProtKB-UniRule"/>
</dbReference>
<dbReference type="CDD" id="cd07914">
    <property type="entry name" value="IGPD"/>
    <property type="match status" value="1"/>
</dbReference>
<dbReference type="FunFam" id="3.30.230.40:FF:000001">
    <property type="entry name" value="Imidazoleglycerol-phosphate dehydratase HisB"/>
    <property type="match status" value="1"/>
</dbReference>
<dbReference type="FunFam" id="3.30.230.40:FF:000003">
    <property type="entry name" value="Imidazoleglycerol-phosphate dehydratase HisB"/>
    <property type="match status" value="1"/>
</dbReference>
<dbReference type="Gene3D" id="3.30.230.40">
    <property type="entry name" value="Imidazole glycerol phosphate dehydratase, domain 1"/>
    <property type="match status" value="2"/>
</dbReference>
<dbReference type="HAMAP" id="MF_00076">
    <property type="entry name" value="HisB"/>
    <property type="match status" value="1"/>
</dbReference>
<dbReference type="InterPro" id="IPR038494">
    <property type="entry name" value="IGPD_sf"/>
</dbReference>
<dbReference type="InterPro" id="IPR000807">
    <property type="entry name" value="ImidazoleglycerolP_deHydtase"/>
</dbReference>
<dbReference type="InterPro" id="IPR020565">
    <property type="entry name" value="ImidazoleglycerP_deHydtase_CS"/>
</dbReference>
<dbReference type="InterPro" id="IPR020568">
    <property type="entry name" value="Ribosomal_Su5_D2-typ_SF"/>
</dbReference>
<dbReference type="NCBIfam" id="NF002111">
    <property type="entry name" value="PRK00951.2-1"/>
    <property type="match status" value="1"/>
</dbReference>
<dbReference type="NCBIfam" id="NF002114">
    <property type="entry name" value="PRK00951.2-4"/>
    <property type="match status" value="1"/>
</dbReference>
<dbReference type="PANTHER" id="PTHR23133:SF2">
    <property type="entry name" value="IMIDAZOLEGLYCEROL-PHOSPHATE DEHYDRATASE"/>
    <property type="match status" value="1"/>
</dbReference>
<dbReference type="PANTHER" id="PTHR23133">
    <property type="entry name" value="IMIDAZOLEGLYCEROL-PHOSPHATE DEHYDRATASE HIS7"/>
    <property type="match status" value="1"/>
</dbReference>
<dbReference type="Pfam" id="PF00475">
    <property type="entry name" value="IGPD"/>
    <property type="match status" value="1"/>
</dbReference>
<dbReference type="SUPFAM" id="SSF54211">
    <property type="entry name" value="Ribosomal protein S5 domain 2-like"/>
    <property type="match status" value="2"/>
</dbReference>
<dbReference type="PROSITE" id="PS00954">
    <property type="entry name" value="IGP_DEHYDRATASE_1"/>
    <property type="match status" value="1"/>
</dbReference>
<dbReference type="PROSITE" id="PS00955">
    <property type="entry name" value="IGP_DEHYDRATASE_2"/>
    <property type="match status" value="1"/>
</dbReference>
<reference key="1">
    <citation type="journal article" date="2008" name="Environ. Microbiol.">
        <title>The complete genome sequence of Moorella thermoacetica (f. Clostridium thermoaceticum).</title>
        <authorList>
            <person name="Pierce E."/>
            <person name="Xie G."/>
            <person name="Barabote R.D."/>
            <person name="Saunders E."/>
            <person name="Han C.S."/>
            <person name="Detter J.C."/>
            <person name="Richardson P."/>
            <person name="Brettin T.S."/>
            <person name="Das A."/>
            <person name="Ljungdahl L.G."/>
            <person name="Ragsdale S.W."/>
        </authorList>
    </citation>
    <scope>NUCLEOTIDE SEQUENCE [LARGE SCALE GENOMIC DNA]</scope>
    <source>
        <strain>ATCC 39073 / JCM 9320</strain>
    </source>
</reference>
<proteinExistence type="inferred from homology"/>
<sequence>MSREALIERQTTETNIRLKVALDGSGTWQGSSGIPFFDHLLAQMARHGLLDLKVWAEGDLEVDNHHTVEDIGICLGQAVKKALGDKKGISRYGSALVPMDEALVLVALDFSGRPYLAWGLELPPGRIGSLETELVEEFLRAMVNNSGLTLHVRQLAGHNAHHLAEALFKALGRAIRQAVTLDPREQGIPSTKGILS</sequence>
<comment type="catalytic activity">
    <reaction evidence="1">
        <text>D-erythro-1-(imidazol-4-yl)glycerol 3-phosphate = 3-(imidazol-4-yl)-2-oxopropyl phosphate + H2O</text>
        <dbReference type="Rhea" id="RHEA:11040"/>
        <dbReference type="ChEBI" id="CHEBI:15377"/>
        <dbReference type="ChEBI" id="CHEBI:57766"/>
        <dbReference type="ChEBI" id="CHEBI:58278"/>
        <dbReference type="EC" id="4.2.1.19"/>
    </reaction>
</comment>
<comment type="pathway">
    <text evidence="1">Amino-acid biosynthesis; L-histidine biosynthesis; L-histidine from 5-phospho-alpha-D-ribose 1-diphosphate: step 6/9.</text>
</comment>
<comment type="subcellular location">
    <subcellularLocation>
        <location evidence="1">Cytoplasm</location>
    </subcellularLocation>
</comment>
<comment type="similarity">
    <text evidence="1">Belongs to the imidazoleglycerol-phosphate dehydratase family.</text>
</comment>